<keyword id="KW-0687">Ribonucleoprotein</keyword>
<keyword id="KW-0689">Ribosomal protein</keyword>
<protein>
    <recommendedName>
        <fullName evidence="1">Large ribosomal subunit protein bL12</fullName>
    </recommendedName>
    <alternativeName>
        <fullName evidence="2">50S ribosomal protein L7/L12</fullName>
    </alternativeName>
</protein>
<sequence>MADLAKLVDDLSSLTVLEAAELAKMLEEKWGVSAAAAVAVAAGPAAGGAAAPAAEEQTEFTVVLAAAGDKKIEVIKEVRAITGLGLKEAKDLVEGAPKPVKEGVSKDDAAKLKAQLEKAGAKVELK</sequence>
<evidence type="ECO:0000255" key="1">
    <source>
        <dbReference type="HAMAP-Rule" id="MF_00368"/>
    </source>
</evidence>
<evidence type="ECO:0000305" key="2"/>
<feature type="chain" id="PRO_1000121460" description="Large ribosomal subunit protein bL12">
    <location>
        <begin position="1"/>
        <end position="126"/>
    </location>
</feature>
<dbReference type="EMBL" id="CP000943">
    <property type="protein sequence ID" value="ACA14932.1"/>
    <property type="molecule type" value="Genomic_DNA"/>
</dbReference>
<dbReference type="RefSeq" id="WP_012330350.1">
    <property type="nucleotide sequence ID" value="NC_010511.1"/>
</dbReference>
<dbReference type="SMR" id="B0UHX7"/>
<dbReference type="STRING" id="426117.M446_0361"/>
<dbReference type="KEGG" id="met:M446_0361"/>
<dbReference type="eggNOG" id="COG0222">
    <property type="taxonomic scope" value="Bacteria"/>
</dbReference>
<dbReference type="HOGENOM" id="CLU_086499_3_0_5"/>
<dbReference type="GO" id="GO:0022625">
    <property type="term" value="C:cytosolic large ribosomal subunit"/>
    <property type="evidence" value="ECO:0007669"/>
    <property type="project" value="TreeGrafter"/>
</dbReference>
<dbReference type="GO" id="GO:0003729">
    <property type="term" value="F:mRNA binding"/>
    <property type="evidence" value="ECO:0007669"/>
    <property type="project" value="TreeGrafter"/>
</dbReference>
<dbReference type="GO" id="GO:0003735">
    <property type="term" value="F:structural constituent of ribosome"/>
    <property type="evidence" value="ECO:0007669"/>
    <property type="project" value="InterPro"/>
</dbReference>
<dbReference type="GO" id="GO:0006412">
    <property type="term" value="P:translation"/>
    <property type="evidence" value="ECO:0007669"/>
    <property type="project" value="UniProtKB-UniRule"/>
</dbReference>
<dbReference type="CDD" id="cd00387">
    <property type="entry name" value="Ribosomal_L7_L12"/>
    <property type="match status" value="1"/>
</dbReference>
<dbReference type="FunFam" id="1.20.5.710:FF:000007">
    <property type="entry name" value="50S ribosomal protein L7/L12"/>
    <property type="match status" value="1"/>
</dbReference>
<dbReference type="FunFam" id="3.30.1390.10:FF:000001">
    <property type="entry name" value="50S ribosomal protein L7/L12"/>
    <property type="match status" value="1"/>
</dbReference>
<dbReference type="Gene3D" id="3.30.1390.10">
    <property type="match status" value="1"/>
</dbReference>
<dbReference type="Gene3D" id="1.20.5.710">
    <property type="entry name" value="Single helix bin"/>
    <property type="match status" value="1"/>
</dbReference>
<dbReference type="HAMAP" id="MF_00368">
    <property type="entry name" value="Ribosomal_bL12"/>
    <property type="match status" value="1"/>
</dbReference>
<dbReference type="InterPro" id="IPR000206">
    <property type="entry name" value="Ribosomal_bL12"/>
</dbReference>
<dbReference type="InterPro" id="IPR013823">
    <property type="entry name" value="Ribosomal_bL12_C"/>
</dbReference>
<dbReference type="InterPro" id="IPR014719">
    <property type="entry name" value="Ribosomal_bL12_C/ClpS-like"/>
</dbReference>
<dbReference type="InterPro" id="IPR008932">
    <property type="entry name" value="Ribosomal_bL12_oligo"/>
</dbReference>
<dbReference type="InterPro" id="IPR036235">
    <property type="entry name" value="Ribosomal_bL12_oligo_N_sf"/>
</dbReference>
<dbReference type="NCBIfam" id="TIGR00855">
    <property type="entry name" value="L12"/>
    <property type="match status" value="1"/>
</dbReference>
<dbReference type="PANTHER" id="PTHR45987">
    <property type="entry name" value="39S RIBOSOMAL PROTEIN L12"/>
    <property type="match status" value="1"/>
</dbReference>
<dbReference type="PANTHER" id="PTHR45987:SF4">
    <property type="entry name" value="LARGE RIBOSOMAL SUBUNIT PROTEIN BL12M"/>
    <property type="match status" value="1"/>
</dbReference>
<dbReference type="Pfam" id="PF00542">
    <property type="entry name" value="Ribosomal_L12"/>
    <property type="match status" value="1"/>
</dbReference>
<dbReference type="Pfam" id="PF16320">
    <property type="entry name" value="Ribosomal_L12_N"/>
    <property type="match status" value="1"/>
</dbReference>
<dbReference type="SUPFAM" id="SSF54736">
    <property type="entry name" value="ClpS-like"/>
    <property type="match status" value="1"/>
</dbReference>
<dbReference type="SUPFAM" id="SSF48300">
    <property type="entry name" value="Ribosomal protein L7/12, oligomerisation (N-terminal) domain"/>
    <property type="match status" value="1"/>
</dbReference>
<gene>
    <name evidence="1" type="primary">rplL</name>
    <name type="ordered locus">M446_0361</name>
</gene>
<comment type="function">
    <text evidence="1">Forms part of the ribosomal stalk which helps the ribosome interact with GTP-bound translation factors. Is thus essential for accurate translation.</text>
</comment>
<comment type="subunit">
    <text evidence="1">Homodimer. Part of the ribosomal stalk of the 50S ribosomal subunit. Forms a multimeric L10(L12)X complex, where L10 forms an elongated spine to which 2 to 4 L12 dimers bind in a sequential fashion. Binds GTP-bound translation factors.</text>
</comment>
<comment type="similarity">
    <text evidence="1">Belongs to the bacterial ribosomal protein bL12 family.</text>
</comment>
<name>RL7_METS4</name>
<organism>
    <name type="scientific">Methylobacterium sp. (strain 4-46)</name>
    <dbReference type="NCBI Taxonomy" id="426117"/>
    <lineage>
        <taxon>Bacteria</taxon>
        <taxon>Pseudomonadati</taxon>
        <taxon>Pseudomonadota</taxon>
        <taxon>Alphaproteobacteria</taxon>
        <taxon>Hyphomicrobiales</taxon>
        <taxon>Methylobacteriaceae</taxon>
        <taxon>Methylobacterium</taxon>
    </lineage>
</organism>
<proteinExistence type="inferred from homology"/>
<reference key="1">
    <citation type="submission" date="2008-02" db="EMBL/GenBank/DDBJ databases">
        <title>Complete sequence of chromosome of Methylobacterium sp. 4-46.</title>
        <authorList>
            <consortium name="US DOE Joint Genome Institute"/>
            <person name="Copeland A."/>
            <person name="Lucas S."/>
            <person name="Lapidus A."/>
            <person name="Glavina del Rio T."/>
            <person name="Dalin E."/>
            <person name="Tice H."/>
            <person name="Bruce D."/>
            <person name="Goodwin L."/>
            <person name="Pitluck S."/>
            <person name="Chertkov O."/>
            <person name="Brettin T."/>
            <person name="Detter J.C."/>
            <person name="Han C."/>
            <person name="Kuske C.R."/>
            <person name="Schmutz J."/>
            <person name="Larimer F."/>
            <person name="Land M."/>
            <person name="Hauser L."/>
            <person name="Kyrpides N."/>
            <person name="Ivanova N."/>
            <person name="Marx C.J."/>
            <person name="Richardson P."/>
        </authorList>
    </citation>
    <scope>NUCLEOTIDE SEQUENCE [LARGE SCALE GENOMIC DNA]</scope>
    <source>
        <strain>4-46</strain>
    </source>
</reference>
<accession>B0UHX7</accession>